<accession>Q82AF9</accession>
<organism>
    <name type="scientific">Streptomyces avermitilis (strain ATCC 31267 / DSM 46492 / JCM 5070 / NBRC 14893 / NCIMB 12804 / NRRL 8165 / MA-4680)</name>
    <dbReference type="NCBI Taxonomy" id="227882"/>
    <lineage>
        <taxon>Bacteria</taxon>
        <taxon>Bacillati</taxon>
        <taxon>Actinomycetota</taxon>
        <taxon>Actinomycetes</taxon>
        <taxon>Kitasatosporales</taxon>
        <taxon>Streptomycetaceae</taxon>
        <taxon>Streptomyces</taxon>
    </lineage>
</organism>
<feature type="chain" id="PRO_0000157053" description="Thiamine-phosphate synthase">
    <location>
        <begin position="1"/>
        <end position="215"/>
    </location>
</feature>
<feature type="binding site" evidence="1">
    <location>
        <begin position="43"/>
        <end position="47"/>
    </location>
    <ligand>
        <name>4-amino-2-methyl-5-(diphosphooxymethyl)pyrimidine</name>
        <dbReference type="ChEBI" id="CHEBI:57841"/>
    </ligand>
</feature>
<feature type="binding site" evidence="1">
    <location>
        <position position="75"/>
    </location>
    <ligand>
        <name>4-amino-2-methyl-5-(diphosphooxymethyl)pyrimidine</name>
        <dbReference type="ChEBI" id="CHEBI:57841"/>
    </ligand>
</feature>
<feature type="binding site" evidence="1">
    <location>
        <position position="76"/>
    </location>
    <ligand>
        <name>Mg(2+)</name>
        <dbReference type="ChEBI" id="CHEBI:18420"/>
    </ligand>
</feature>
<feature type="binding site" evidence="1">
    <location>
        <position position="95"/>
    </location>
    <ligand>
        <name>Mg(2+)</name>
        <dbReference type="ChEBI" id="CHEBI:18420"/>
    </ligand>
</feature>
<feature type="binding site" evidence="1">
    <location>
        <position position="114"/>
    </location>
    <ligand>
        <name>4-amino-2-methyl-5-(diphosphooxymethyl)pyrimidine</name>
        <dbReference type="ChEBI" id="CHEBI:57841"/>
    </ligand>
</feature>
<feature type="binding site" evidence="1">
    <location>
        <begin position="141"/>
        <end position="143"/>
    </location>
    <ligand>
        <name>2-[(2R,5Z)-2-carboxy-4-methylthiazol-5(2H)-ylidene]ethyl phosphate</name>
        <dbReference type="ChEBI" id="CHEBI:62899"/>
    </ligand>
</feature>
<feature type="binding site" evidence="1">
    <location>
        <position position="144"/>
    </location>
    <ligand>
        <name>4-amino-2-methyl-5-(diphosphooxymethyl)pyrimidine</name>
        <dbReference type="ChEBI" id="CHEBI:57841"/>
    </ligand>
</feature>
<feature type="binding site" evidence="1">
    <location>
        <position position="172"/>
    </location>
    <ligand>
        <name>2-[(2R,5Z)-2-carboxy-4-methylthiazol-5(2H)-ylidene]ethyl phosphate</name>
        <dbReference type="ChEBI" id="CHEBI:62899"/>
    </ligand>
</feature>
<name>THIE_STRAW</name>
<reference key="1">
    <citation type="journal article" date="2001" name="Proc. Natl. Acad. Sci. U.S.A.">
        <title>Genome sequence of an industrial microorganism Streptomyces avermitilis: deducing the ability of producing secondary metabolites.</title>
        <authorList>
            <person name="Omura S."/>
            <person name="Ikeda H."/>
            <person name="Ishikawa J."/>
            <person name="Hanamoto A."/>
            <person name="Takahashi C."/>
            <person name="Shinose M."/>
            <person name="Takahashi Y."/>
            <person name="Horikawa H."/>
            <person name="Nakazawa H."/>
            <person name="Osonoe T."/>
            <person name="Kikuchi H."/>
            <person name="Shiba T."/>
            <person name="Sakaki Y."/>
            <person name="Hattori M."/>
        </authorList>
    </citation>
    <scope>NUCLEOTIDE SEQUENCE [LARGE SCALE GENOMIC DNA]</scope>
    <source>
        <strain>ATCC 31267 / DSM 46492 / JCM 5070 / NBRC 14893 / NCIMB 12804 / NRRL 8165 / MA-4680</strain>
    </source>
</reference>
<reference key="2">
    <citation type="journal article" date="2003" name="Nat. Biotechnol.">
        <title>Complete genome sequence and comparative analysis of the industrial microorganism Streptomyces avermitilis.</title>
        <authorList>
            <person name="Ikeda H."/>
            <person name="Ishikawa J."/>
            <person name="Hanamoto A."/>
            <person name="Shinose M."/>
            <person name="Kikuchi H."/>
            <person name="Shiba T."/>
            <person name="Sakaki Y."/>
            <person name="Hattori M."/>
            <person name="Omura S."/>
        </authorList>
    </citation>
    <scope>NUCLEOTIDE SEQUENCE [LARGE SCALE GENOMIC DNA]</scope>
    <source>
        <strain>ATCC 31267 / DSM 46492 / JCM 5070 / NBRC 14893 / NCIMB 12804 / NRRL 8165 / MA-4680</strain>
    </source>
</reference>
<protein>
    <recommendedName>
        <fullName evidence="1">Thiamine-phosphate synthase</fullName>
        <shortName evidence="1">TP synthase</shortName>
        <shortName evidence="1">TPS</shortName>
        <ecNumber evidence="1">2.5.1.3</ecNumber>
    </recommendedName>
    <alternativeName>
        <fullName evidence="1">Thiamine-phosphate pyrophosphorylase</fullName>
        <shortName evidence="1">TMP pyrophosphorylase</shortName>
        <shortName evidence="1">TMP-PPase</shortName>
    </alternativeName>
</protein>
<dbReference type="EC" id="2.5.1.3" evidence="1"/>
<dbReference type="EMBL" id="BA000030">
    <property type="protein sequence ID" value="BAC73810.1"/>
    <property type="status" value="ALT_INIT"/>
    <property type="molecule type" value="Genomic_DNA"/>
</dbReference>
<dbReference type="RefSeq" id="WP_037646754.1">
    <property type="nucleotide sequence ID" value="NZ_JZJK01000089.1"/>
</dbReference>
<dbReference type="SMR" id="Q82AF9"/>
<dbReference type="GeneID" id="41543176"/>
<dbReference type="KEGG" id="sma:SAVERM_6099"/>
<dbReference type="eggNOG" id="COG0352">
    <property type="taxonomic scope" value="Bacteria"/>
</dbReference>
<dbReference type="HOGENOM" id="CLU_018272_3_0_11"/>
<dbReference type="OrthoDB" id="3243336at2"/>
<dbReference type="UniPathway" id="UPA00060">
    <property type="reaction ID" value="UER00141"/>
</dbReference>
<dbReference type="Proteomes" id="UP000000428">
    <property type="component" value="Chromosome"/>
</dbReference>
<dbReference type="GO" id="GO:0005737">
    <property type="term" value="C:cytoplasm"/>
    <property type="evidence" value="ECO:0007669"/>
    <property type="project" value="TreeGrafter"/>
</dbReference>
<dbReference type="GO" id="GO:0000287">
    <property type="term" value="F:magnesium ion binding"/>
    <property type="evidence" value="ECO:0007669"/>
    <property type="project" value="UniProtKB-UniRule"/>
</dbReference>
<dbReference type="GO" id="GO:0004789">
    <property type="term" value="F:thiamine-phosphate diphosphorylase activity"/>
    <property type="evidence" value="ECO:0007669"/>
    <property type="project" value="UniProtKB-UniRule"/>
</dbReference>
<dbReference type="GO" id="GO:0009228">
    <property type="term" value="P:thiamine biosynthetic process"/>
    <property type="evidence" value="ECO:0007669"/>
    <property type="project" value="UniProtKB-KW"/>
</dbReference>
<dbReference type="GO" id="GO:0009229">
    <property type="term" value="P:thiamine diphosphate biosynthetic process"/>
    <property type="evidence" value="ECO:0007669"/>
    <property type="project" value="UniProtKB-UniRule"/>
</dbReference>
<dbReference type="CDD" id="cd00564">
    <property type="entry name" value="TMP_TenI"/>
    <property type="match status" value="1"/>
</dbReference>
<dbReference type="FunFam" id="3.20.20.70:FF:000178">
    <property type="entry name" value="Thiamine-phosphate synthase"/>
    <property type="match status" value="1"/>
</dbReference>
<dbReference type="Gene3D" id="3.20.20.70">
    <property type="entry name" value="Aldolase class I"/>
    <property type="match status" value="1"/>
</dbReference>
<dbReference type="HAMAP" id="MF_00097">
    <property type="entry name" value="TMP_synthase"/>
    <property type="match status" value="1"/>
</dbReference>
<dbReference type="InterPro" id="IPR013785">
    <property type="entry name" value="Aldolase_TIM"/>
</dbReference>
<dbReference type="InterPro" id="IPR036206">
    <property type="entry name" value="ThiamineP_synth_sf"/>
</dbReference>
<dbReference type="InterPro" id="IPR022998">
    <property type="entry name" value="ThiamineP_synth_TenI"/>
</dbReference>
<dbReference type="InterPro" id="IPR034291">
    <property type="entry name" value="TMP_synthase"/>
</dbReference>
<dbReference type="NCBIfam" id="TIGR00693">
    <property type="entry name" value="thiE"/>
    <property type="match status" value="1"/>
</dbReference>
<dbReference type="PANTHER" id="PTHR20857">
    <property type="entry name" value="THIAMINE-PHOSPHATE PYROPHOSPHORYLASE"/>
    <property type="match status" value="1"/>
</dbReference>
<dbReference type="PANTHER" id="PTHR20857:SF15">
    <property type="entry name" value="THIAMINE-PHOSPHATE SYNTHASE"/>
    <property type="match status" value="1"/>
</dbReference>
<dbReference type="Pfam" id="PF02581">
    <property type="entry name" value="TMP-TENI"/>
    <property type="match status" value="1"/>
</dbReference>
<dbReference type="SUPFAM" id="SSF51391">
    <property type="entry name" value="Thiamin phosphate synthase"/>
    <property type="match status" value="1"/>
</dbReference>
<proteinExistence type="inferred from homology"/>
<keyword id="KW-0460">Magnesium</keyword>
<keyword id="KW-0479">Metal-binding</keyword>
<keyword id="KW-1185">Reference proteome</keyword>
<keyword id="KW-0784">Thiamine biosynthesis</keyword>
<keyword id="KW-0808">Transferase</keyword>
<gene>
    <name evidence="1" type="primary">thiE</name>
    <name type="ordered locus">SAV_6099</name>
</gene>
<sequence length="215" mass="23005">MPDTARDRLADARVYLCTDARRRQGDLAEFLDAALAGGVDIVQLRDKGMEAAEELEHLQVFADACRRHGKLLAVNDRADVAHAVDSDVLHLGQGDLPVPAARAILGADVLIGRSTHAEAEAEAAAVQEGVDYFCTGPCWPTPTKPGRHAPGLDLVRHTAALGTDRPWFAIGGIDLGNLDEVLEAGARRVVVVRAITEADDPKAAAEEFAKRLRHA</sequence>
<evidence type="ECO:0000255" key="1">
    <source>
        <dbReference type="HAMAP-Rule" id="MF_00097"/>
    </source>
</evidence>
<evidence type="ECO:0000305" key="2"/>
<comment type="function">
    <text evidence="1">Condenses 4-methyl-5-(beta-hydroxyethyl)thiazole monophosphate (THZ-P) and 2-methyl-4-amino-5-hydroxymethyl pyrimidine pyrophosphate (HMP-PP) to form thiamine monophosphate (TMP).</text>
</comment>
<comment type="catalytic activity">
    <reaction evidence="1">
        <text>2-[(2R,5Z)-2-carboxy-4-methylthiazol-5(2H)-ylidene]ethyl phosphate + 4-amino-2-methyl-5-(diphosphooxymethyl)pyrimidine + 2 H(+) = thiamine phosphate + CO2 + diphosphate</text>
        <dbReference type="Rhea" id="RHEA:47844"/>
        <dbReference type="ChEBI" id="CHEBI:15378"/>
        <dbReference type="ChEBI" id="CHEBI:16526"/>
        <dbReference type="ChEBI" id="CHEBI:33019"/>
        <dbReference type="ChEBI" id="CHEBI:37575"/>
        <dbReference type="ChEBI" id="CHEBI:57841"/>
        <dbReference type="ChEBI" id="CHEBI:62899"/>
        <dbReference type="EC" id="2.5.1.3"/>
    </reaction>
</comment>
<comment type="catalytic activity">
    <reaction evidence="1">
        <text>2-(2-carboxy-4-methylthiazol-5-yl)ethyl phosphate + 4-amino-2-methyl-5-(diphosphooxymethyl)pyrimidine + 2 H(+) = thiamine phosphate + CO2 + diphosphate</text>
        <dbReference type="Rhea" id="RHEA:47848"/>
        <dbReference type="ChEBI" id="CHEBI:15378"/>
        <dbReference type="ChEBI" id="CHEBI:16526"/>
        <dbReference type="ChEBI" id="CHEBI:33019"/>
        <dbReference type="ChEBI" id="CHEBI:37575"/>
        <dbReference type="ChEBI" id="CHEBI:57841"/>
        <dbReference type="ChEBI" id="CHEBI:62890"/>
        <dbReference type="EC" id="2.5.1.3"/>
    </reaction>
</comment>
<comment type="catalytic activity">
    <reaction evidence="1">
        <text>4-methyl-5-(2-phosphooxyethyl)-thiazole + 4-amino-2-methyl-5-(diphosphooxymethyl)pyrimidine + H(+) = thiamine phosphate + diphosphate</text>
        <dbReference type="Rhea" id="RHEA:22328"/>
        <dbReference type="ChEBI" id="CHEBI:15378"/>
        <dbReference type="ChEBI" id="CHEBI:33019"/>
        <dbReference type="ChEBI" id="CHEBI:37575"/>
        <dbReference type="ChEBI" id="CHEBI:57841"/>
        <dbReference type="ChEBI" id="CHEBI:58296"/>
        <dbReference type="EC" id="2.5.1.3"/>
    </reaction>
</comment>
<comment type="cofactor">
    <cofactor evidence="1">
        <name>Mg(2+)</name>
        <dbReference type="ChEBI" id="CHEBI:18420"/>
    </cofactor>
    <text evidence="1">Binds 1 Mg(2+) ion per subunit.</text>
</comment>
<comment type="pathway">
    <text evidence="1">Cofactor biosynthesis; thiamine diphosphate biosynthesis; thiamine phosphate from 4-amino-2-methyl-5-diphosphomethylpyrimidine and 4-methyl-5-(2-phosphoethyl)-thiazole: step 1/1.</text>
</comment>
<comment type="similarity">
    <text evidence="1">Belongs to the thiamine-phosphate synthase family.</text>
</comment>
<comment type="sequence caution" evidence="2">
    <conflict type="erroneous initiation">
        <sequence resource="EMBL-CDS" id="BAC73810"/>
    </conflict>
</comment>